<evidence type="ECO:0000255" key="1">
    <source>
        <dbReference type="HAMAP-Rule" id="MF_00137"/>
    </source>
</evidence>
<proteinExistence type="inferred from homology"/>
<organism>
    <name type="scientific">Shewanella amazonensis (strain ATCC BAA-1098 / SB2B)</name>
    <dbReference type="NCBI Taxonomy" id="326297"/>
    <lineage>
        <taxon>Bacteria</taxon>
        <taxon>Pseudomonadati</taxon>
        <taxon>Pseudomonadota</taxon>
        <taxon>Gammaproteobacteria</taxon>
        <taxon>Alteromonadales</taxon>
        <taxon>Shewanellaceae</taxon>
        <taxon>Shewanella</taxon>
    </lineage>
</organism>
<feature type="chain" id="PRO_1000117843" description="Phosphoribosylaminoimidazole-succinocarboxamide synthase">
    <location>
        <begin position="1"/>
        <end position="367"/>
    </location>
</feature>
<reference key="1">
    <citation type="submission" date="2006-12" db="EMBL/GenBank/DDBJ databases">
        <title>Complete sequence of Shewanella amazonensis SB2B.</title>
        <authorList>
            <consortium name="US DOE Joint Genome Institute"/>
            <person name="Copeland A."/>
            <person name="Lucas S."/>
            <person name="Lapidus A."/>
            <person name="Barry K."/>
            <person name="Detter J.C."/>
            <person name="Glavina del Rio T."/>
            <person name="Hammon N."/>
            <person name="Israni S."/>
            <person name="Dalin E."/>
            <person name="Tice H."/>
            <person name="Pitluck S."/>
            <person name="Munk A.C."/>
            <person name="Brettin T."/>
            <person name="Bruce D."/>
            <person name="Han C."/>
            <person name="Tapia R."/>
            <person name="Gilna P."/>
            <person name="Schmutz J."/>
            <person name="Larimer F."/>
            <person name="Land M."/>
            <person name="Hauser L."/>
            <person name="Kyrpides N."/>
            <person name="Mikhailova N."/>
            <person name="Fredrickson J."/>
            <person name="Richardson P."/>
        </authorList>
    </citation>
    <scope>NUCLEOTIDE SEQUENCE [LARGE SCALE GENOMIC DNA]</scope>
    <source>
        <strain>ATCC BAA-1098 / SB2B</strain>
    </source>
</reference>
<keyword id="KW-0067">ATP-binding</keyword>
<keyword id="KW-0436">Ligase</keyword>
<keyword id="KW-0547">Nucleotide-binding</keyword>
<keyword id="KW-0658">Purine biosynthesis</keyword>
<keyword id="KW-1185">Reference proteome</keyword>
<dbReference type="EC" id="6.3.2.6" evidence="1"/>
<dbReference type="EMBL" id="CP000507">
    <property type="protein sequence ID" value="ABL98701.1"/>
    <property type="molecule type" value="Genomic_DNA"/>
</dbReference>
<dbReference type="RefSeq" id="WP_011758611.1">
    <property type="nucleotide sequence ID" value="NC_008700.1"/>
</dbReference>
<dbReference type="SMR" id="A1S2U5"/>
<dbReference type="STRING" id="326297.Sama_0491"/>
<dbReference type="KEGG" id="saz:Sama_0491"/>
<dbReference type="eggNOG" id="COG0152">
    <property type="taxonomic scope" value="Bacteria"/>
</dbReference>
<dbReference type="HOGENOM" id="CLU_064197_0_0_6"/>
<dbReference type="OrthoDB" id="9801549at2"/>
<dbReference type="UniPathway" id="UPA00074">
    <property type="reaction ID" value="UER00131"/>
</dbReference>
<dbReference type="Proteomes" id="UP000009175">
    <property type="component" value="Chromosome"/>
</dbReference>
<dbReference type="GO" id="GO:0005737">
    <property type="term" value="C:cytoplasm"/>
    <property type="evidence" value="ECO:0007669"/>
    <property type="project" value="TreeGrafter"/>
</dbReference>
<dbReference type="GO" id="GO:0005524">
    <property type="term" value="F:ATP binding"/>
    <property type="evidence" value="ECO:0007669"/>
    <property type="project" value="UniProtKB-KW"/>
</dbReference>
<dbReference type="GO" id="GO:0004639">
    <property type="term" value="F:phosphoribosylaminoimidazolesuccinocarboxamide synthase activity"/>
    <property type="evidence" value="ECO:0007669"/>
    <property type="project" value="UniProtKB-UniRule"/>
</dbReference>
<dbReference type="GO" id="GO:0006189">
    <property type="term" value="P:'de novo' IMP biosynthetic process"/>
    <property type="evidence" value="ECO:0007669"/>
    <property type="project" value="UniProtKB-UniRule"/>
</dbReference>
<dbReference type="CDD" id="cd01414">
    <property type="entry name" value="SAICAR_synt_Sc"/>
    <property type="match status" value="1"/>
</dbReference>
<dbReference type="Gene3D" id="3.30.470.20">
    <property type="entry name" value="ATP-grasp fold, B domain"/>
    <property type="match status" value="1"/>
</dbReference>
<dbReference type="Gene3D" id="3.30.200.20">
    <property type="entry name" value="Phosphorylase Kinase, domain 1"/>
    <property type="match status" value="1"/>
</dbReference>
<dbReference type="HAMAP" id="MF_00137">
    <property type="entry name" value="SAICAR_synth"/>
    <property type="match status" value="1"/>
</dbReference>
<dbReference type="InterPro" id="IPR028923">
    <property type="entry name" value="SAICAR_synt/ADE2_N"/>
</dbReference>
<dbReference type="InterPro" id="IPR014106">
    <property type="entry name" value="SAICAR_synthase_Vibrio-typ"/>
</dbReference>
<dbReference type="InterPro" id="IPR018236">
    <property type="entry name" value="SAICAR_synthetase_CS"/>
</dbReference>
<dbReference type="NCBIfam" id="NF010567">
    <property type="entry name" value="PRK13960.1"/>
    <property type="match status" value="1"/>
</dbReference>
<dbReference type="NCBIfam" id="TIGR02735">
    <property type="entry name" value="purC_vibrio"/>
    <property type="match status" value="1"/>
</dbReference>
<dbReference type="PANTHER" id="PTHR43700">
    <property type="entry name" value="PHOSPHORIBOSYLAMINOIMIDAZOLE-SUCCINOCARBOXAMIDE SYNTHASE"/>
    <property type="match status" value="1"/>
</dbReference>
<dbReference type="PANTHER" id="PTHR43700:SF1">
    <property type="entry name" value="PHOSPHORIBOSYLAMINOIMIDAZOLE-SUCCINOCARBOXAMIDE SYNTHASE"/>
    <property type="match status" value="1"/>
</dbReference>
<dbReference type="Pfam" id="PF01259">
    <property type="entry name" value="SAICAR_synt"/>
    <property type="match status" value="1"/>
</dbReference>
<dbReference type="SUPFAM" id="SSF56104">
    <property type="entry name" value="SAICAR synthase-like"/>
    <property type="match status" value="1"/>
</dbReference>
<dbReference type="PROSITE" id="PS01057">
    <property type="entry name" value="SAICAR_SYNTHETASE_1"/>
    <property type="match status" value="1"/>
</dbReference>
<gene>
    <name evidence="1" type="primary">purC</name>
    <name type="ordered locus">Sama_0491</name>
</gene>
<name>PUR7_SHEAM</name>
<accession>A1S2U5</accession>
<protein>
    <recommendedName>
        <fullName evidence="1">Phosphoribosylaminoimidazole-succinocarboxamide synthase</fullName>
        <ecNumber evidence="1">6.3.2.6</ecNumber>
    </recommendedName>
    <alternativeName>
        <fullName evidence="1">SAICAR synthetase</fullName>
    </alternativeName>
</protein>
<sequence>MSLADSVLAVNNDLPIRTDKPVHSGKVRSVYWLTEADSARLIRERGYDVPADTPLAIMVISDRISAFDCIFHGEGDLRGIPGKGAALNAISNHWFGLFKENGLADSHILDIPHPFVWIVQKARPIKVEAIIRQYITGSMWRAYQKGERVFCGITLPEGLQKDQKLPELLITPSTKGILTGIPGVPEQDDVNISRADIEANFEAFGFEKKEDIDLYEKLLKEGFGVISEALAKLDQVFVDTKFEFGYVTDSNGNSKLIYMDEVGTPDSSRIWDGAAYRDGKIVENSKEGFRQFLLNHFPDPDILLNKDRMPEREALARDNALPLDAMMNVSRTYTGIAEKVTGRKIELSDNPKAEIIAILKEQYALVD</sequence>
<comment type="catalytic activity">
    <reaction evidence="1">
        <text>5-amino-1-(5-phospho-D-ribosyl)imidazole-4-carboxylate + L-aspartate + ATP = (2S)-2-[5-amino-1-(5-phospho-beta-D-ribosyl)imidazole-4-carboxamido]succinate + ADP + phosphate + 2 H(+)</text>
        <dbReference type="Rhea" id="RHEA:22628"/>
        <dbReference type="ChEBI" id="CHEBI:15378"/>
        <dbReference type="ChEBI" id="CHEBI:29991"/>
        <dbReference type="ChEBI" id="CHEBI:30616"/>
        <dbReference type="ChEBI" id="CHEBI:43474"/>
        <dbReference type="ChEBI" id="CHEBI:58443"/>
        <dbReference type="ChEBI" id="CHEBI:77657"/>
        <dbReference type="ChEBI" id="CHEBI:456216"/>
        <dbReference type="EC" id="6.3.2.6"/>
    </reaction>
</comment>
<comment type="pathway">
    <text evidence="1">Purine metabolism; IMP biosynthesis via de novo pathway; 5-amino-1-(5-phospho-D-ribosyl)imidazole-4-carboxamide from 5-amino-1-(5-phospho-D-ribosyl)imidazole-4-carboxylate: step 1/2.</text>
</comment>
<comment type="similarity">
    <text evidence="1">Belongs to the SAICAR synthetase family.</text>
</comment>